<dbReference type="EC" id="1.17.7.4" evidence="1"/>
<dbReference type="EMBL" id="AE002098">
    <property type="protein sequence ID" value="AAF42166.1"/>
    <property type="molecule type" value="Genomic_DNA"/>
</dbReference>
<dbReference type="PIR" id="D81038">
    <property type="entry name" value="D81038"/>
</dbReference>
<dbReference type="RefSeq" id="NP_274828.1">
    <property type="nucleotide sequence ID" value="NC_003112.2"/>
</dbReference>
<dbReference type="RefSeq" id="WP_002221497.1">
    <property type="nucleotide sequence ID" value="NC_003112.2"/>
</dbReference>
<dbReference type="SMR" id="P65192"/>
<dbReference type="FunCoup" id="P65192">
    <property type="interactions" value="418"/>
</dbReference>
<dbReference type="STRING" id="122586.NMB1831"/>
<dbReference type="PaxDb" id="122586-NMB1831"/>
<dbReference type="GeneID" id="93386737"/>
<dbReference type="KEGG" id="nme:NMB1831"/>
<dbReference type="PATRIC" id="fig|122586.8.peg.2331"/>
<dbReference type="HOGENOM" id="CLU_027486_1_1_4"/>
<dbReference type="InParanoid" id="P65192"/>
<dbReference type="OrthoDB" id="9804068at2"/>
<dbReference type="UniPathway" id="UPA00056">
    <property type="reaction ID" value="UER00097"/>
</dbReference>
<dbReference type="UniPathway" id="UPA00059">
    <property type="reaction ID" value="UER00105"/>
</dbReference>
<dbReference type="Proteomes" id="UP000000425">
    <property type="component" value="Chromosome"/>
</dbReference>
<dbReference type="GO" id="GO:0005829">
    <property type="term" value="C:cytosol"/>
    <property type="evidence" value="ECO:0000318"/>
    <property type="project" value="GO_Central"/>
</dbReference>
<dbReference type="GO" id="GO:0051539">
    <property type="term" value="F:4 iron, 4 sulfur cluster binding"/>
    <property type="evidence" value="ECO:0007669"/>
    <property type="project" value="UniProtKB-UniRule"/>
</dbReference>
<dbReference type="GO" id="GO:0051745">
    <property type="term" value="F:4-hydroxy-3-methylbut-2-enyl diphosphate reductase activity"/>
    <property type="evidence" value="ECO:0000318"/>
    <property type="project" value="GO_Central"/>
</dbReference>
<dbReference type="GO" id="GO:0046872">
    <property type="term" value="F:metal ion binding"/>
    <property type="evidence" value="ECO:0007669"/>
    <property type="project" value="UniProtKB-KW"/>
</dbReference>
<dbReference type="GO" id="GO:0050992">
    <property type="term" value="P:dimethylallyl diphosphate biosynthetic process"/>
    <property type="evidence" value="ECO:0007669"/>
    <property type="project" value="UniProtKB-UniRule"/>
</dbReference>
<dbReference type="GO" id="GO:0019288">
    <property type="term" value="P:isopentenyl diphosphate biosynthetic process, methylerythritol 4-phosphate pathway"/>
    <property type="evidence" value="ECO:0000318"/>
    <property type="project" value="GO_Central"/>
</dbReference>
<dbReference type="GO" id="GO:0016114">
    <property type="term" value="P:terpenoid biosynthetic process"/>
    <property type="evidence" value="ECO:0007669"/>
    <property type="project" value="UniProtKB-UniRule"/>
</dbReference>
<dbReference type="CDD" id="cd13944">
    <property type="entry name" value="lytB_ispH"/>
    <property type="match status" value="1"/>
</dbReference>
<dbReference type="Gene3D" id="3.40.50.11270">
    <property type="match status" value="1"/>
</dbReference>
<dbReference type="Gene3D" id="3.40.1010.20">
    <property type="entry name" value="4-hydroxy-3-methylbut-2-enyl diphosphate reductase, catalytic domain"/>
    <property type="match status" value="2"/>
</dbReference>
<dbReference type="HAMAP" id="MF_00191">
    <property type="entry name" value="IspH"/>
    <property type="match status" value="1"/>
</dbReference>
<dbReference type="InterPro" id="IPR003451">
    <property type="entry name" value="LytB/IspH"/>
</dbReference>
<dbReference type="NCBIfam" id="TIGR00216">
    <property type="entry name" value="ispH_lytB"/>
    <property type="match status" value="1"/>
</dbReference>
<dbReference type="NCBIfam" id="NF002188">
    <property type="entry name" value="PRK01045.1-2"/>
    <property type="match status" value="1"/>
</dbReference>
<dbReference type="NCBIfam" id="NF002189">
    <property type="entry name" value="PRK01045.1-3"/>
    <property type="match status" value="1"/>
</dbReference>
<dbReference type="NCBIfam" id="NF002190">
    <property type="entry name" value="PRK01045.1-4"/>
    <property type="match status" value="1"/>
</dbReference>
<dbReference type="PANTHER" id="PTHR30426">
    <property type="entry name" value="4-HYDROXY-3-METHYLBUT-2-ENYL DIPHOSPHATE REDUCTASE"/>
    <property type="match status" value="1"/>
</dbReference>
<dbReference type="PANTHER" id="PTHR30426:SF0">
    <property type="entry name" value="4-HYDROXY-3-METHYLBUT-2-ENYL DIPHOSPHATE REDUCTASE"/>
    <property type="match status" value="1"/>
</dbReference>
<dbReference type="Pfam" id="PF02401">
    <property type="entry name" value="LYTB"/>
    <property type="match status" value="1"/>
</dbReference>
<accession>P65192</accession>
<accession>Q9JR39</accession>
<sequence>MNEKTIILANPRGFCAGVDRAISIVERALEEFGAPIYVRHEVVHNKFVVDNLREKGAVFIEDLAEVPPGATLVYSAHGVSKAVRQEAAERGFRVFDATCPLVTKVHKEVARLDAQDCEIIMIGHKGHVEVEGTMGQLAPGKMLLVETVGDVAKLEVRNPDKLAYVSQTTLSVDETKDIIAALNARFPNIRNPHKEDICYATTNRQTAVKELAEQCDIVIVVGSPNSSNSNRLREVAASRGIDAYMVDNAGYLQRAWFEGKNKVGVTAGASAPEVLVREVLATIRGWGHETVREGEGAEESIVFVLPKELRREGETKPDLCKR</sequence>
<keyword id="KW-0004">4Fe-4S</keyword>
<keyword id="KW-0408">Iron</keyword>
<keyword id="KW-0411">Iron-sulfur</keyword>
<keyword id="KW-0414">Isoprene biosynthesis</keyword>
<keyword id="KW-0479">Metal-binding</keyword>
<keyword id="KW-0560">Oxidoreductase</keyword>
<keyword id="KW-1185">Reference proteome</keyword>
<gene>
    <name evidence="1" type="primary">ispH</name>
    <name type="synonym">lytB</name>
    <name type="ordered locus">NMB1831</name>
</gene>
<name>ISPH_NEIMB</name>
<organism>
    <name type="scientific">Neisseria meningitidis serogroup B (strain ATCC BAA-335 / MC58)</name>
    <dbReference type="NCBI Taxonomy" id="122586"/>
    <lineage>
        <taxon>Bacteria</taxon>
        <taxon>Pseudomonadati</taxon>
        <taxon>Pseudomonadota</taxon>
        <taxon>Betaproteobacteria</taxon>
        <taxon>Neisseriales</taxon>
        <taxon>Neisseriaceae</taxon>
        <taxon>Neisseria</taxon>
    </lineage>
</organism>
<reference key="1">
    <citation type="journal article" date="2000" name="Science">
        <title>Complete genome sequence of Neisseria meningitidis serogroup B strain MC58.</title>
        <authorList>
            <person name="Tettelin H."/>
            <person name="Saunders N.J."/>
            <person name="Heidelberg J.F."/>
            <person name="Jeffries A.C."/>
            <person name="Nelson K.E."/>
            <person name="Eisen J.A."/>
            <person name="Ketchum K.A."/>
            <person name="Hood D.W."/>
            <person name="Peden J.F."/>
            <person name="Dodson R.J."/>
            <person name="Nelson W.C."/>
            <person name="Gwinn M.L."/>
            <person name="DeBoy R.T."/>
            <person name="Peterson J.D."/>
            <person name="Hickey E.K."/>
            <person name="Haft D.H."/>
            <person name="Salzberg S.L."/>
            <person name="White O."/>
            <person name="Fleischmann R.D."/>
            <person name="Dougherty B.A."/>
            <person name="Mason T.M."/>
            <person name="Ciecko A."/>
            <person name="Parksey D.S."/>
            <person name="Blair E."/>
            <person name="Cittone H."/>
            <person name="Clark E.B."/>
            <person name="Cotton M.D."/>
            <person name="Utterback T.R."/>
            <person name="Khouri H.M."/>
            <person name="Qin H."/>
            <person name="Vamathevan J.J."/>
            <person name="Gill J."/>
            <person name="Scarlato V."/>
            <person name="Masignani V."/>
            <person name="Pizza M."/>
            <person name="Grandi G."/>
            <person name="Sun L."/>
            <person name="Smith H.O."/>
            <person name="Fraser C.M."/>
            <person name="Moxon E.R."/>
            <person name="Rappuoli R."/>
            <person name="Venter J.C."/>
        </authorList>
    </citation>
    <scope>NUCLEOTIDE SEQUENCE [LARGE SCALE GENOMIC DNA]</scope>
    <source>
        <strain>ATCC BAA-335 / MC58</strain>
    </source>
</reference>
<protein>
    <recommendedName>
        <fullName evidence="1">4-hydroxy-3-methylbut-2-enyl diphosphate reductase</fullName>
        <shortName evidence="1">HMBPP reductase</shortName>
        <ecNumber evidence="1">1.17.7.4</ecNumber>
    </recommendedName>
</protein>
<feature type="chain" id="PRO_0000128845" description="4-hydroxy-3-methylbut-2-enyl diphosphate reductase">
    <location>
        <begin position="1"/>
        <end position="322"/>
    </location>
</feature>
<feature type="active site" description="Proton donor" evidence="1">
    <location>
        <position position="129"/>
    </location>
</feature>
<feature type="binding site" evidence="1">
    <location>
        <position position="15"/>
    </location>
    <ligand>
        <name>[4Fe-4S] cluster</name>
        <dbReference type="ChEBI" id="CHEBI:49883"/>
    </ligand>
</feature>
<feature type="binding site" evidence="1">
    <location>
        <position position="44"/>
    </location>
    <ligand>
        <name>(2E)-4-hydroxy-3-methylbut-2-enyl diphosphate</name>
        <dbReference type="ChEBI" id="CHEBI:128753"/>
    </ligand>
</feature>
<feature type="binding site" evidence="1">
    <location>
        <position position="44"/>
    </location>
    <ligand>
        <name>dimethylallyl diphosphate</name>
        <dbReference type="ChEBI" id="CHEBI:57623"/>
    </ligand>
</feature>
<feature type="binding site" evidence="1">
    <location>
        <position position="44"/>
    </location>
    <ligand>
        <name>isopentenyl diphosphate</name>
        <dbReference type="ChEBI" id="CHEBI:128769"/>
    </ligand>
</feature>
<feature type="binding site" evidence="1">
    <location>
        <position position="77"/>
    </location>
    <ligand>
        <name>(2E)-4-hydroxy-3-methylbut-2-enyl diphosphate</name>
        <dbReference type="ChEBI" id="CHEBI:128753"/>
    </ligand>
</feature>
<feature type="binding site" evidence="1">
    <location>
        <position position="77"/>
    </location>
    <ligand>
        <name>dimethylallyl diphosphate</name>
        <dbReference type="ChEBI" id="CHEBI:57623"/>
    </ligand>
</feature>
<feature type="binding site" evidence="1">
    <location>
        <position position="77"/>
    </location>
    <ligand>
        <name>isopentenyl diphosphate</name>
        <dbReference type="ChEBI" id="CHEBI:128769"/>
    </ligand>
</feature>
<feature type="binding site" evidence="1">
    <location>
        <position position="99"/>
    </location>
    <ligand>
        <name>[4Fe-4S] cluster</name>
        <dbReference type="ChEBI" id="CHEBI:49883"/>
    </ligand>
</feature>
<feature type="binding site" evidence="1">
    <location>
        <position position="127"/>
    </location>
    <ligand>
        <name>(2E)-4-hydroxy-3-methylbut-2-enyl diphosphate</name>
        <dbReference type="ChEBI" id="CHEBI:128753"/>
    </ligand>
</feature>
<feature type="binding site" evidence="1">
    <location>
        <position position="127"/>
    </location>
    <ligand>
        <name>dimethylallyl diphosphate</name>
        <dbReference type="ChEBI" id="CHEBI:57623"/>
    </ligand>
</feature>
<feature type="binding site" evidence="1">
    <location>
        <position position="127"/>
    </location>
    <ligand>
        <name>isopentenyl diphosphate</name>
        <dbReference type="ChEBI" id="CHEBI:128769"/>
    </ligand>
</feature>
<feature type="binding site" evidence="1">
    <location>
        <position position="168"/>
    </location>
    <ligand>
        <name>(2E)-4-hydroxy-3-methylbut-2-enyl diphosphate</name>
        <dbReference type="ChEBI" id="CHEBI:128753"/>
    </ligand>
</feature>
<feature type="binding site" evidence="1">
    <location>
        <position position="198"/>
    </location>
    <ligand>
        <name>[4Fe-4S] cluster</name>
        <dbReference type="ChEBI" id="CHEBI:49883"/>
    </ligand>
</feature>
<feature type="binding site" evidence="1">
    <location>
        <position position="226"/>
    </location>
    <ligand>
        <name>(2E)-4-hydroxy-3-methylbut-2-enyl diphosphate</name>
        <dbReference type="ChEBI" id="CHEBI:128753"/>
    </ligand>
</feature>
<feature type="binding site" evidence="1">
    <location>
        <position position="226"/>
    </location>
    <ligand>
        <name>dimethylallyl diphosphate</name>
        <dbReference type="ChEBI" id="CHEBI:57623"/>
    </ligand>
</feature>
<feature type="binding site" evidence="1">
    <location>
        <position position="226"/>
    </location>
    <ligand>
        <name>isopentenyl diphosphate</name>
        <dbReference type="ChEBI" id="CHEBI:128769"/>
    </ligand>
</feature>
<feature type="binding site" evidence="1">
    <location>
        <position position="227"/>
    </location>
    <ligand>
        <name>(2E)-4-hydroxy-3-methylbut-2-enyl diphosphate</name>
        <dbReference type="ChEBI" id="CHEBI:128753"/>
    </ligand>
</feature>
<feature type="binding site" evidence="1">
    <location>
        <position position="227"/>
    </location>
    <ligand>
        <name>dimethylallyl diphosphate</name>
        <dbReference type="ChEBI" id="CHEBI:57623"/>
    </ligand>
</feature>
<feature type="binding site" evidence="1">
    <location>
        <position position="227"/>
    </location>
    <ligand>
        <name>isopentenyl diphosphate</name>
        <dbReference type="ChEBI" id="CHEBI:128769"/>
    </ligand>
</feature>
<feature type="binding site" evidence="1">
    <location>
        <position position="228"/>
    </location>
    <ligand>
        <name>(2E)-4-hydroxy-3-methylbut-2-enyl diphosphate</name>
        <dbReference type="ChEBI" id="CHEBI:128753"/>
    </ligand>
</feature>
<feature type="binding site" evidence="1">
    <location>
        <position position="228"/>
    </location>
    <ligand>
        <name>dimethylallyl diphosphate</name>
        <dbReference type="ChEBI" id="CHEBI:57623"/>
    </ligand>
</feature>
<feature type="binding site" evidence="1">
    <location>
        <position position="228"/>
    </location>
    <ligand>
        <name>isopentenyl diphosphate</name>
        <dbReference type="ChEBI" id="CHEBI:128769"/>
    </ligand>
</feature>
<feature type="binding site" evidence="1">
    <location>
        <position position="270"/>
    </location>
    <ligand>
        <name>(2E)-4-hydroxy-3-methylbut-2-enyl diphosphate</name>
        <dbReference type="ChEBI" id="CHEBI:128753"/>
    </ligand>
</feature>
<feature type="binding site" evidence="1">
    <location>
        <position position="270"/>
    </location>
    <ligand>
        <name>dimethylallyl diphosphate</name>
        <dbReference type="ChEBI" id="CHEBI:57623"/>
    </ligand>
</feature>
<feature type="binding site" evidence="1">
    <location>
        <position position="270"/>
    </location>
    <ligand>
        <name>isopentenyl diphosphate</name>
        <dbReference type="ChEBI" id="CHEBI:128769"/>
    </ligand>
</feature>
<comment type="function">
    <text evidence="1">Catalyzes the conversion of 1-hydroxy-2-methyl-2-(E)-butenyl 4-diphosphate (HMBPP) into a mixture of isopentenyl diphosphate (IPP) and dimethylallyl diphosphate (DMAPP). Acts in the terminal step of the DOXP/MEP pathway for isoprenoid precursor biosynthesis.</text>
</comment>
<comment type="catalytic activity">
    <reaction evidence="1">
        <text>isopentenyl diphosphate + 2 oxidized [2Fe-2S]-[ferredoxin] + H2O = (2E)-4-hydroxy-3-methylbut-2-enyl diphosphate + 2 reduced [2Fe-2S]-[ferredoxin] + 2 H(+)</text>
        <dbReference type="Rhea" id="RHEA:24488"/>
        <dbReference type="Rhea" id="RHEA-COMP:10000"/>
        <dbReference type="Rhea" id="RHEA-COMP:10001"/>
        <dbReference type="ChEBI" id="CHEBI:15377"/>
        <dbReference type="ChEBI" id="CHEBI:15378"/>
        <dbReference type="ChEBI" id="CHEBI:33737"/>
        <dbReference type="ChEBI" id="CHEBI:33738"/>
        <dbReference type="ChEBI" id="CHEBI:128753"/>
        <dbReference type="ChEBI" id="CHEBI:128769"/>
        <dbReference type="EC" id="1.17.7.4"/>
    </reaction>
</comment>
<comment type="catalytic activity">
    <reaction evidence="1">
        <text>dimethylallyl diphosphate + 2 oxidized [2Fe-2S]-[ferredoxin] + H2O = (2E)-4-hydroxy-3-methylbut-2-enyl diphosphate + 2 reduced [2Fe-2S]-[ferredoxin] + 2 H(+)</text>
        <dbReference type="Rhea" id="RHEA:24825"/>
        <dbReference type="Rhea" id="RHEA-COMP:10000"/>
        <dbReference type="Rhea" id="RHEA-COMP:10001"/>
        <dbReference type="ChEBI" id="CHEBI:15377"/>
        <dbReference type="ChEBI" id="CHEBI:15378"/>
        <dbReference type="ChEBI" id="CHEBI:33737"/>
        <dbReference type="ChEBI" id="CHEBI:33738"/>
        <dbReference type="ChEBI" id="CHEBI:57623"/>
        <dbReference type="ChEBI" id="CHEBI:128753"/>
        <dbReference type="EC" id="1.17.7.4"/>
    </reaction>
</comment>
<comment type="cofactor">
    <cofactor evidence="1">
        <name>[4Fe-4S] cluster</name>
        <dbReference type="ChEBI" id="CHEBI:49883"/>
    </cofactor>
    <text evidence="1">Binds 1 [4Fe-4S] cluster per subunit.</text>
</comment>
<comment type="pathway">
    <text evidence="1">Isoprenoid biosynthesis; dimethylallyl diphosphate biosynthesis; dimethylallyl diphosphate from (2E)-4-hydroxy-3-methylbutenyl diphosphate: step 1/1.</text>
</comment>
<comment type="pathway">
    <text evidence="1">Isoprenoid biosynthesis; isopentenyl diphosphate biosynthesis via DXP pathway; isopentenyl diphosphate from 1-deoxy-D-xylulose 5-phosphate: step 6/6.</text>
</comment>
<comment type="similarity">
    <text evidence="1">Belongs to the IspH family.</text>
</comment>
<evidence type="ECO:0000255" key="1">
    <source>
        <dbReference type="HAMAP-Rule" id="MF_00191"/>
    </source>
</evidence>
<proteinExistence type="inferred from homology"/>